<name>AZO1_STAAN</name>
<reference key="1">
    <citation type="journal article" date="2001" name="Lancet">
        <title>Whole genome sequencing of meticillin-resistant Staphylococcus aureus.</title>
        <authorList>
            <person name="Kuroda M."/>
            <person name="Ohta T."/>
            <person name="Uchiyama I."/>
            <person name="Baba T."/>
            <person name="Yuzawa H."/>
            <person name="Kobayashi I."/>
            <person name="Cui L."/>
            <person name="Oguchi A."/>
            <person name="Aoki K."/>
            <person name="Nagai Y."/>
            <person name="Lian J.-Q."/>
            <person name="Ito T."/>
            <person name="Kanamori M."/>
            <person name="Matsumaru H."/>
            <person name="Maruyama A."/>
            <person name="Murakami H."/>
            <person name="Hosoyama A."/>
            <person name="Mizutani-Ui Y."/>
            <person name="Takahashi N.K."/>
            <person name="Sawano T."/>
            <person name="Inoue R."/>
            <person name="Kaito C."/>
            <person name="Sekimizu K."/>
            <person name="Hirakawa H."/>
            <person name="Kuhara S."/>
            <person name="Goto S."/>
            <person name="Yabuzaki J."/>
            <person name="Kanehisa M."/>
            <person name="Yamashita A."/>
            <person name="Oshima K."/>
            <person name="Furuya K."/>
            <person name="Yoshino C."/>
            <person name="Shiba T."/>
            <person name="Hattori M."/>
            <person name="Ogasawara N."/>
            <person name="Hayashi H."/>
            <person name="Hiramatsu K."/>
        </authorList>
    </citation>
    <scope>NUCLEOTIDE SEQUENCE [LARGE SCALE GENOMIC DNA]</scope>
    <source>
        <strain>N315</strain>
    </source>
</reference>
<reference key="2">
    <citation type="submission" date="2007-10" db="UniProtKB">
        <title>Shotgun proteomic analysis of total and membrane protein extracts of S. aureus strain N315.</title>
        <authorList>
            <person name="Vaezzadeh A.R."/>
            <person name="Deshusses J."/>
            <person name="Lescuyer P."/>
            <person name="Hochstrasser D.F."/>
        </authorList>
    </citation>
    <scope>IDENTIFICATION BY MASS SPECTROMETRY [LARGE SCALE ANALYSIS]</scope>
    <source>
        <strain>N315</strain>
    </source>
</reference>
<accession>Q7A782</accession>
<sequence length="188" mass="20912">MKGLIIIGSAQVNSHTSALARYLTEHFKTHDIEAEIFDLAEKPLNQLDFSGTTPSIDEIKQNMKDLKEKAMAADFLILGTPNYHGSYSGILKNALDHLNMDYFKMKPVGLIGNSGGIVSSEPLSHLRVIVRSLLGIAVPTQIATHDSDFAKNEDGSYYLNDSEFQLRARLFVDQIVSFVNNSPYEHLK</sequence>
<feature type="chain" id="PRO_0000245993" description="FMN-dependent NADPH-azoreductase">
    <location>
        <begin position="1"/>
        <end position="188"/>
    </location>
</feature>
<evidence type="ECO:0000250" key="1"/>
<evidence type="ECO:0000305" key="2"/>
<dbReference type="EC" id="1.7.-.-"/>
<dbReference type="EMBL" id="BA000018">
    <property type="protein sequence ID" value="BAB41749.1"/>
    <property type="molecule type" value="Genomic_DNA"/>
</dbReference>
<dbReference type="PIR" id="B89824">
    <property type="entry name" value="B89824"/>
</dbReference>
<dbReference type="RefSeq" id="WP_000677261.1">
    <property type="nucleotide sequence ID" value="NC_002745.2"/>
</dbReference>
<dbReference type="SMR" id="Q7A782"/>
<dbReference type="EnsemblBacteria" id="BAB41749">
    <property type="protein sequence ID" value="BAB41749"/>
    <property type="gene ID" value="BAB41749"/>
</dbReference>
<dbReference type="KEGG" id="sau:SA0518"/>
<dbReference type="HOGENOM" id="CLU_055322_1_2_9"/>
<dbReference type="GO" id="GO:0005829">
    <property type="term" value="C:cytosol"/>
    <property type="evidence" value="ECO:0007669"/>
    <property type="project" value="TreeGrafter"/>
</dbReference>
<dbReference type="GO" id="GO:0010181">
    <property type="term" value="F:FMN binding"/>
    <property type="evidence" value="ECO:0007669"/>
    <property type="project" value="TreeGrafter"/>
</dbReference>
<dbReference type="GO" id="GO:0016491">
    <property type="term" value="F:oxidoreductase activity"/>
    <property type="evidence" value="ECO:0007669"/>
    <property type="project" value="UniProtKB-KW"/>
</dbReference>
<dbReference type="Gene3D" id="3.40.50.360">
    <property type="match status" value="1"/>
</dbReference>
<dbReference type="InterPro" id="IPR029039">
    <property type="entry name" value="Flavoprotein-like_sf"/>
</dbReference>
<dbReference type="InterPro" id="IPR005025">
    <property type="entry name" value="FMN_Rdtase-like_dom"/>
</dbReference>
<dbReference type="InterPro" id="IPR050712">
    <property type="entry name" value="NAD(P)H-dep_reductase"/>
</dbReference>
<dbReference type="PANTHER" id="PTHR30543">
    <property type="entry name" value="CHROMATE REDUCTASE"/>
    <property type="match status" value="1"/>
</dbReference>
<dbReference type="PANTHER" id="PTHR30543:SF21">
    <property type="entry name" value="NAD(P)H-DEPENDENT FMN REDUCTASE LOT6"/>
    <property type="match status" value="1"/>
</dbReference>
<dbReference type="Pfam" id="PF03358">
    <property type="entry name" value="FMN_red"/>
    <property type="match status" value="1"/>
</dbReference>
<dbReference type="SUPFAM" id="SSF52218">
    <property type="entry name" value="Flavoproteins"/>
    <property type="match status" value="1"/>
</dbReference>
<protein>
    <recommendedName>
        <fullName>FMN-dependent NADPH-azoreductase</fullName>
        <ecNumber>1.7.-.-</ecNumber>
    </recommendedName>
    <alternativeName>
        <fullName>NADPH-dependent flavo-azoreductase</fullName>
    </alternativeName>
    <alternativeName>
        <fullName>NADPH-flavin azoreductase</fullName>
    </alternativeName>
</protein>
<proteinExistence type="evidence at protein level"/>
<organism>
    <name type="scientific">Staphylococcus aureus (strain N315)</name>
    <dbReference type="NCBI Taxonomy" id="158879"/>
    <lineage>
        <taxon>Bacteria</taxon>
        <taxon>Bacillati</taxon>
        <taxon>Bacillota</taxon>
        <taxon>Bacilli</taxon>
        <taxon>Bacillales</taxon>
        <taxon>Staphylococcaceae</taxon>
        <taxon>Staphylococcus</taxon>
    </lineage>
</organism>
<keyword id="KW-0285">Flavoprotein</keyword>
<keyword id="KW-0288">FMN</keyword>
<keyword id="KW-0521">NADP</keyword>
<keyword id="KW-0560">Oxidoreductase</keyword>
<comment type="function">
    <text evidence="1">Catalyzes the reductive cleavage of azo bond in aromatic azo compounds to the corresponding amines. Requires NADPH, but not NADH, as an electron donor for its activity (By similarity).</text>
</comment>
<comment type="cofactor">
    <cofactor evidence="1">
        <name>FMN</name>
        <dbReference type="ChEBI" id="CHEBI:58210"/>
    </cofactor>
</comment>
<comment type="subunit">
    <text evidence="1">Homotetramer.</text>
</comment>
<comment type="similarity">
    <text evidence="2">Belongs to the azoreductase type 2 family.</text>
</comment>
<gene>
    <name type="primary">azo1</name>
    <name type="ordered locus">SA0518</name>
</gene>